<organism>
    <name type="scientific">Bordetella petrii (strain ATCC BAA-461 / DSM 12804 / CCUG 43448)</name>
    <dbReference type="NCBI Taxonomy" id="340100"/>
    <lineage>
        <taxon>Bacteria</taxon>
        <taxon>Pseudomonadati</taxon>
        <taxon>Pseudomonadota</taxon>
        <taxon>Betaproteobacteria</taxon>
        <taxon>Burkholderiales</taxon>
        <taxon>Alcaligenaceae</taxon>
        <taxon>Bordetella</taxon>
    </lineage>
</organism>
<evidence type="ECO:0000255" key="1">
    <source>
        <dbReference type="HAMAP-Rule" id="MF_00133"/>
    </source>
</evidence>
<feature type="chain" id="PRO_1000095780" description="Tryptophan synthase beta chain">
    <location>
        <begin position="1"/>
        <end position="399"/>
    </location>
</feature>
<feature type="modified residue" description="N6-(pyridoxal phosphate)lysine" evidence="1">
    <location>
        <position position="92"/>
    </location>
</feature>
<proteinExistence type="inferred from homology"/>
<sequence>MKPYDLPDAQGHFGQYGGVFVAETLIHALDELRAAYDHCRLDPKFIETFNYELKHFVGRPSPVYHAARWSRELGGAQIWFKREDLNHTGAHKVNNCIGQALLARHMGKPRVIAETGAGQHGVATATVAARYGMECVVYMGSEDVRRQASNVYRMKLLGATVVPVESGSRTLKDALNEAMRDWVTNIENTFYIIGTVAGPDPYPRMVRDFQTVIGNECLEQMPQDAGRQPDYVVASVGGGSNAMGIFYPYIPHENVRLIGVEAAGEGLDSGRHAASLAAGQVGVLHGNRTYVMQNADGQVQETHSVSAGLDYPGVGPEHAWLKDSGRAQYVGITDDEALAAFHDCCRIEGIMPALESSHAIAQAVKMAPTLPKDTIILVNLSGRGDKDMHTVAERAGIQF</sequence>
<gene>
    <name evidence="1" type="primary">trpB</name>
    <name type="ordered locus">Bpet1737</name>
</gene>
<accession>A9IIE0</accession>
<reference key="1">
    <citation type="journal article" date="2008" name="BMC Genomics">
        <title>The missing link: Bordetella petrii is endowed with both the metabolic versatility of environmental bacteria and virulence traits of pathogenic Bordetellae.</title>
        <authorList>
            <person name="Gross R."/>
            <person name="Guzman C.A."/>
            <person name="Sebaihia M."/>
            <person name="Martin dos Santos V.A.P."/>
            <person name="Pieper D.H."/>
            <person name="Koebnik R."/>
            <person name="Lechner M."/>
            <person name="Bartels D."/>
            <person name="Buhrmester J."/>
            <person name="Choudhuri J.V."/>
            <person name="Ebensen T."/>
            <person name="Gaigalat L."/>
            <person name="Herrmann S."/>
            <person name="Khachane A.N."/>
            <person name="Larisch C."/>
            <person name="Link S."/>
            <person name="Linke B."/>
            <person name="Meyer F."/>
            <person name="Mormann S."/>
            <person name="Nakunst D."/>
            <person name="Rueckert C."/>
            <person name="Schneiker-Bekel S."/>
            <person name="Schulze K."/>
            <person name="Voerholter F.-J."/>
            <person name="Yevsa T."/>
            <person name="Engle J.T."/>
            <person name="Goldman W.E."/>
            <person name="Puehler A."/>
            <person name="Goebel U.B."/>
            <person name="Goesmann A."/>
            <person name="Bloecker H."/>
            <person name="Kaiser O."/>
            <person name="Martinez-Arias R."/>
        </authorList>
    </citation>
    <scope>NUCLEOTIDE SEQUENCE [LARGE SCALE GENOMIC DNA]</scope>
    <source>
        <strain>ATCC BAA-461 / DSM 12804 / CCUG 43448</strain>
    </source>
</reference>
<keyword id="KW-0028">Amino-acid biosynthesis</keyword>
<keyword id="KW-0057">Aromatic amino acid biosynthesis</keyword>
<keyword id="KW-0456">Lyase</keyword>
<keyword id="KW-0663">Pyridoxal phosphate</keyword>
<keyword id="KW-0822">Tryptophan biosynthesis</keyword>
<protein>
    <recommendedName>
        <fullName evidence="1">Tryptophan synthase beta chain</fullName>
        <ecNumber evidence="1">4.2.1.20</ecNumber>
    </recommendedName>
</protein>
<comment type="function">
    <text evidence="1">The beta subunit is responsible for the synthesis of L-tryptophan from indole and L-serine.</text>
</comment>
<comment type="catalytic activity">
    <reaction evidence="1">
        <text>(1S,2R)-1-C-(indol-3-yl)glycerol 3-phosphate + L-serine = D-glyceraldehyde 3-phosphate + L-tryptophan + H2O</text>
        <dbReference type="Rhea" id="RHEA:10532"/>
        <dbReference type="ChEBI" id="CHEBI:15377"/>
        <dbReference type="ChEBI" id="CHEBI:33384"/>
        <dbReference type="ChEBI" id="CHEBI:57912"/>
        <dbReference type="ChEBI" id="CHEBI:58866"/>
        <dbReference type="ChEBI" id="CHEBI:59776"/>
        <dbReference type="EC" id="4.2.1.20"/>
    </reaction>
</comment>
<comment type="cofactor">
    <cofactor evidence="1">
        <name>pyridoxal 5'-phosphate</name>
        <dbReference type="ChEBI" id="CHEBI:597326"/>
    </cofactor>
</comment>
<comment type="pathway">
    <text evidence="1">Amino-acid biosynthesis; L-tryptophan biosynthesis; L-tryptophan from chorismate: step 5/5.</text>
</comment>
<comment type="subunit">
    <text evidence="1">Tetramer of two alpha and two beta chains.</text>
</comment>
<comment type="similarity">
    <text evidence="1">Belongs to the TrpB family.</text>
</comment>
<name>TRPB_BORPD</name>
<dbReference type="EC" id="4.2.1.20" evidence="1"/>
<dbReference type="EMBL" id="AM902716">
    <property type="protein sequence ID" value="CAP42076.1"/>
    <property type="molecule type" value="Genomic_DNA"/>
</dbReference>
<dbReference type="SMR" id="A9IIE0"/>
<dbReference type="STRING" id="94624.Bpet1737"/>
<dbReference type="KEGG" id="bpt:Bpet1737"/>
<dbReference type="eggNOG" id="COG0133">
    <property type="taxonomic scope" value="Bacteria"/>
</dbReference>
<dbReference type="UniPathway" id="UPA00035">
    <property type="reaction ID" value="UER00044"/>
</dbReference>
<dbReference type="Proteomes" id="UP000001225">
    <property type="component" value="Chromosome"/>
</dbReference>
<dbReference type="GO" id="GO:0005737">
    <property type="term" value="C:cytoplasm"/>
    <property type="evidence" value="ECO:0007669"/>
    <property type="project" value="TreeGrafter"/>
</dbReference>
<dbReference type="GO" id="GO:0004834">
    <property type="term" value="F:tryptophan synthase activity"/>
    <property type="evidence" value="ECO:0007669"/>
    <property type="project" value="UniProtKB-UniRule"/>
</dbReference>
<dbReference type="CDD" id="cd06446">
    <property type="entry name" value="Trp-synth_B"/>
    <property type="match status" value="1"/>
</dbReference>
<dbReference type="FunFam" id="3.40.50.1100:FF:000001">
    <property type="entry name" value="Tryptophan synthase beta chain"/>
    <property type="match status" value="1"/>
</dbReference>
<dbReference type="FunFam" id="3.40.50.1100:FF:000004">
    <property type="entry name" value="Tryptophan synthase beta chain"/>
    <property type="match status" value="1"/>
</dbReference>
<dbReference type="Gene3D" id="3.40.50.1100">
    <property type="match status" value="2"/>
</dbReference>
<dbReference type="HAMAP" id="MF_00133">
    <property type="entry name" value="Trp_synth_beta"/>
    <property type="match status" value="1"/>
</dbReference>
<dbReference type="InterPro" id="IPR006653">
    <property type="entry name" value="Trp_synth_b_CS"/>
</dbReference>
<dbReference type="InterPro" id="IPR006654">
    <property type="entry name" value="Trp_synth_beta"/>
</dbReference>
<dbReference type="InterPro" id="IPR023026">
    <property type="entry name" value="Trp_synth_beta/beta-like"/>
</dbReference>
<dbReference type="InterPro" id="IPR001926">
    <property type="entry name" value="TrpB-like_PALP"/>
</dbReference>
<dbReference type="InterPro" id="IPR036052">
    <property type="entry name" value="TrpB-like_PALP_sf"/>
</dbReference>
<dbReference type="NCBIfam" id="TIGR00263">
    <property type="entry name" value="trpB"/>
    <property type="match status" value="1"/>
</dbReference>
<dbReference type="PANTHER" id="PTHR48077:SF3">
    <property type="entry name" value="TRYPTOPHAN SYNTHASE"/>
    <property type="match status" value="1"/>
</dbReference>
<dbReference type="PANTHER" id="PTHR48077">
    <property type="entry name" value="TRYPTOPHAN SYNTHASE-RELATED"/>
    <property type="match status" value="1"/>
</dbReference>
<dbReference type="Pfam" id="PF00291">
    <property type="entry name" value="PALP"/>
    <property type="match status" value="1"/>
</dbReference>
<dbReference type="PIRSF" id="PIRSF001413">
    <property type="entry name" value="Trp_syn_beta"/>
    <property type="match status" value="1"/>
</dbReference>
<dbReference type="SUPFAM" id="SSF53686">
    <property type="entry name" value="Tryptophan synthase beta subunit-like PLP-dependent enzymes"/>
    <property type="match status" value="1"/>
</dbReference>
<dbReference type="PROSITE" id="PS00168">
    <property type="entry name" value="TRP_SYNTHASE_BETA"/>
    <property type="match status" value="1"/>
</dbReference>